<feature type="chain" id="PRO_0000126819" description="Phenylalanine--tRNA ligase alpha subunit">
    <location>
        <begin position="1"/>
        <end position="465"/>
    </location>
</feature>
<feature type="binding site" evidence="1">
    <location>
        <position position="309"/>
    </location>
    <ligand>
        <name>L-phenylalanine</name>
        <dbReference type="ChEBI" id="CHEBI:58095"/>
    </ligand>
</feature>
<feature type="binding site" evidence="1">
    <location>
        <begin position="348"/>
        <end position="350"/>
    </location>
    <ligand>
        <name>L-phenylalanine</name>
        <dbReference type="ChEBI" id="CHEBI:58095"/>
    </ligand>
</feature>
<feature type="binding site" evidence="1">
    <location>
        <position position="388"/>
    </location>
    <ligand>
        <name>L-phenylalanine</name>
        <dbReference type="ChEBI" id="CHEBI:58095"/>
    </ligand>
</feature>
<feature type="binding site" evidence="1">
    <location>
        <position position="390"/>
    </location>
    <ligand>
        <name>Mg(2+)</name>
        <dbReference type="ChEBI" id="CHEBI:18420"/>
        <note>shared with beta subunit</note>
    </ligand>
</feature>
<protein>
    <recommendedName>
        <fullName evidence="1">Phenylalanine--tRNA ligase alpha subunit</fullName>
        <ecNumber evidence="1">6.1.1.20</ecNumber>
    </recommendedName>
    <alternativeName>
        <fullName evidence="1">Phenylalanyl-tRNA synthetase alpha subunit</fullName>
        <shortName evidence="1">PheRS</shortName>
    </alternativeName>
</protein>
<proteinExistence type="inferred from homology"/>
<gene>
    <name evidence="1" type="primary">pheS</name>
    <name type="ordered locus">Saci_1511</name>
</gene>
<sequence>MLSENEIKILSYLKLKKKANAEEISKELGLPLSSIFSLAKLLEEKGYVKIGERKIIRFELTEEGKKRLKEGFPEEILLKELNGQPSLIEDLKNKMGKDLEIAISWARKKNLVKIDQNRVIPNTSNYTFSTEKEALLKPESADEKVLQELLSRKLITRKEESKLEITLLKEEFEEQNYITQLTSELLRSKDWKKYKIREYNVEALPPYFPLAKKHFFRDFIEKLKDVMKELGFTEVNAGYIEMELYNFDLLFQAQDHPAREIHDSFRVDGLGKIDDERLLKEIKEMHEKGWKYSWDPQIAKRLVLRSQTTAVTARILSSRPSVPFKGFSLGKVFRPDSIDATHLIEFHQLDGVIIQKEFSFTDLLGILREIFYKIGIKEIKFKPGYFPFTEPSVEVYGKIEGLGWVEMSGAGLLRPEILKAMDIDANAGAWGIGIDRLAMLLFGLKDIRLLYANDIDFLRKMKVRL</sequence>
<comment type="catalytic activity">
    <reaction evidence="1">
        <text>tRNA(Phe) + L-phenylalanine + ATP = L-phenylalanyl-tRNA(Phe) + AMP + diphosphate + H(+)</text>
        <dbReference type="Rhea" id="RHEA:19413"/>
        <dbReference type="Rhea" id="RHEA-COMP:9668"/>
        <dbReference type="Rhea" id="RHEA-COMP:9699"/>
        <dbReference type="ChEBI" id="CHEBI:15378"/>
        <dbReference type="ChEBI" id="CHEBI:30616"/>
        <dbReference type="ChEBI" id="CHEBI:33019"/>
        <dbReference type="ChEBI" id="CHEBI:58095"/>
        <dbReference type="ChEBI" id="CHEBI:78442"/>
        <dbReference type="ChEBI" id="CHEBI:78531"/>
        <dbReference type="ChEBI" id="CHEBI:456215"/>
        <dbReference type="EC" id="6.1.1.20"/>
    </reaction>
</comment>
<comment type="cofactor">
    <cofactor evidence="1">
        <name>Mg(2+)</name>
        <dbReference type="ChEBI" id="CHEBI:18420"/>
    </cofactor>
    <text evidence="1">Binds 2 magnesium ions per tetramer.</text>
</comment>
<comment type="subunit">
    <text evidence="1">Tetramer of two alpha and two beta subunits.</text>
</comment>
<comment type="subcellular location">
    <subcellularLocation>
        <location evidence="1">Cytoplasm</location>
    </subcellularLocation>
</comment>
<comment type="similarity">
    <text evidence="1">Belongs to the class-II aminoacyl-tRNA synthetase family. Phe-tRNA synthetase alpha subunit type 2 subfamily.</text>
</comment>
<keyword id="KW-0030">Aminoacyl-tRNA synthetase</keyword>
<keyword id="KW-0067">ATP-binding</keyword>
<keyword id="KW-0963">Cytoplasm</keyword>
<keyword id="KW-0436">Ligase</keyword>
<keyword id="KW-0460">Magnesium</keyword>
<keyword id="KW-0479">Metal-binding</keyword>
<keyword id="KW-0547">Nucleotide-binding</keyword>
<keyword id="KW-0648">Protein biosynthesis</keyword>
<keyword id="KW-1185">Reference proteome</keyword>
<evidence type="ECO:0000255" key="1">
    <source>
        <dbReference type="HAMAP-Rule" id="MF_00282"/>
    </source>
</evidence>
<reference key="1">
    <citation type="journal article" date="2005" name="J. Bacteriol.">
        <title>The genome of Sulfolobus acidocaldarius, a model organism of the Crenarchaeota.</title>
        <authorList>
            <person name="Chen L."/>
            <person name="Bruegger K."/>
            <person name="Skovgaard M."/>
            <person name="Redder P."/>
            <person name="She Q."/>
            <person name="Torarinsson E."/>
            <person name="Greve B."/>
            <person name="Awayez M."/>
            <person name="Zibat A."/>
            <person name="Klenk H.-P."/>
            <person name="Garrett R.A."/>
        </authorList>
    </citation>
    <scope>NUCLEOTIDE SEQUENCE [LARGE SCALE GENOMIC DNA]</scope>
    <source>
        <strain>ATCC 33909 / DSM 639 / JCM 8929 / NBRC 15157 / NCIMB 11770</strain>
    </source>
</reference>
<name>SYFA_SULAC</name>
<accession>Q4J8P9</accession>
<organism>
    <name type="scientific">Sulfolobus acidocaldarius (strain ATCC 33909 / DSM 639 / JCM 8929 / NBRC 15157 / NCIMB 11770)</name>
    <dbReference type="NCBI Taxonomy" id="330779"/>
    <lineage>
        <taxon>Archaea</taxon>
        <taxon>Thermoproteota</taxon>
        <taxon>Thermoprotei</taxon>
        <taxon>Sulfolobales</taxon>
        <taxon>Sulfolobaceae</taxon>
        <taxon>Sulfolobus</taxon>
    </lineage>
</organism>
<dbReference type="EC" id="6.1.1.20" evidence="1"/>
<dbReference type="EMBL" id="CP000077">
    <property type="protein sequence ID" value="AAY80831.1"/>
    <property type="molecule type" value="Genomic_DNA"/>
</dbReference>
<dbReference type="RefSeq" id="WP_011278333.1">
    <property type="nucleotide sequence ID" value="NC_007181.1"/>
</dbReference>
<dbReference type="SMR" id="Q4J8P9"/>
<dbReference type="STRING" id="330779.Saci_1511"/>
<dbReference type="GeneID" id="14552009"/>
<dbReference type="KEGG" id="sai:Saci_1511"/>
<dbReference type="PATRIC" id="fig|330779.12.peg.1456"/>
<dbReference type="eggNOG" id="arCOG00410">
    <property type="taxonomic scope" value="Archaea"/>
</dbReference>
<dbReference type="HOGENOM" id="CLU_025086_2_2_2"/>
<dbReference type="Proteomes" id="UP000001018">
    <property type="component" value="Chromosome"/>
</dbReference>
<dbReference type="GO" id="GO:0005737">
    <property type="term" value="C:cytoplasm"/>
    <property type="evidence" value="ECO:0007669"/>
    <property type="project" value="UniProtKB-SubCell"/>
</dbReference>
<dbReference type="GO" id="GO:0005524">
    <property type="term" value="F:ATP binding"/>
    <property type="evidence" value="ECO:0007669"/>
    <property type="project" value="UniProtKB-UniRule"/>
</dbReference>
<dbReference type="GO" id="GO:0000287">
    <property type="term" value="F:magnesium ion binding"/>
    <property type="evidence" value="ECO:0007669"/>
    <property type="project" value="UniProtKB-UniRule"/>
</dbReference>
<dbReference type="GO" id="GO:0004826">
    <property type="term" value="F:phenylalanine-tRNA ligase activity"/>
    <property type="evidence" value="ECO:0007669"/>
    <property type="project" value="UniProtKB-UniRule"/>
</dbReference>
<dbReference type="GO" id="GO:0000049">
    <property type="term" value="F:tRNA binding"/>
    <property type="evidence" value="ECO:0007669"/>
    <property type="project" value="InterPro"/>
</dbReference>
<dbReference type="GO" id="GO:0006432">
    <property type="term" value="P:phenylalanyl-tRNA aminoacylation"/>
    <property type="evidence" value="ECO:0007669"/>
    <property type="project" value="UniProtKB-UniRule"/>
</dbReference>
<dbReference type="CDD" id="cd00496">
    <property type="entry name" value="PheRS_alpha_core"/>
    <property type="match status" value="1"/>
</dbReference>
<dbReference type="Gene3D" id="3.30.930.10">
    <property type="entry name" value="Bira Bifunctional Protein, Domain 2"/>
    <property type="match status" value="1"/>
</dbReference>
<dbReference type="Gene3D" id="1.10.10.10">
    <property type="entry name" value="Winged helix-like DNA-binding domain superfamily/Winged helix DNA-binding domain"/>
    <property type="match status" value="1"/>
</dbReference>
<dbReference type="HAMAP" id="MF_00282">
    <property type="entry name" value="Phe_tRNA_synth_alpha2"/>
    <property type="match status" value="1"/>
</dbReference>
<dbReference type="InterPro" id="IPR006195">
    <property type="entry name" value="aa-tRNA-synth_II"/>
</dbReference>
<dbReference type="InterPro" id="IPR045864">
    <property type="entry name" value="aa-tRNA-synth_II/BPL/LPL"/>
</dbReference>
<dbReference type="InterPro" id="IPR004529">
    <property type="entry name" value="Phe-tRNA-synth_IIc_asu"/>
</dbReference>
<dbReference type="InterPro" id="IPR022917">
    <property type="entry name" value="Phe_tRNA_ligase_alpha_bac/arc"/>
</dbReference>
<dbReference type="InterPro" id="IPR002319">
    <property type="entry name" value="Phenylalanyl-tRNA_Synthase"/>
</dbReference>
<dbReference type="InterPro" id="IPR002831">
    <property type="entry name" value="Tscrpt_reg_TrmB_N"/>
</dbReference>
<dbReference type="InterPro" id="IPR036388">
    <property type="entry name" value="WH-like_DNA-bd_sf"/>
</dbReference>
<dbReference type="InterPro" id="IPR036390">
    <property type="entry name" value="WH_DNA-bd_sf"/>
</dbReference>
<dbReference type="NCBIfam" id="TIGR00468">
    <property type="entry name" value="pheS"/>
    <property type="match status" value="1"/>
</dbReference>
<dbReference type="NCBIfam" id="NF003210">
    <property type="entry name" value="PRK04172.1"/>
    <property type="match status" value="1"/>
</dbReference>
<dbReference type="PANTHER" id="PTHR11538:SF40">
    <property type="entry name" value="PHENYLALANINE--TRNA LIGASE ALPHA SUBUNIT"/>
    <property type="match status" value="1"/>
</dbReference>
<dbReference type="PANTHER" id="PTHR11538">
    <property type="entry name" value="PHENYLALANYL-TRNA SYNTHETASE"/>
    <property type="match status" value="1"/>
</dbReference>
<dbReference type="Pfam" id="PF01978">
    <property type="entry name" value="TrmB"/>
    <property type="match status" value="1"/>
</dbReference>
<dbReference type="Pfam" id="PF01409">
    <property type="entry name" value="tRNA-synt_2d"/>
    <property type="match status" value="1"/>
</dbReference>
<dbReference type="SUPFAM" id="SSF55681">
    <property type="entry name" value="Class II aaRS and biotin synthetases"/>
    <property type="match status" value="1"/>
</dbReference>
<dbReference type="SUPFAM" id="SSF46785">
    <property type="entry name" value="Winged helix' DNA-binding domain"/>
    <property type="match status" value="1"/>
</dbReference>
<dbReference type="PROSITE" id="PS50862">
    <property type="entry name" value="AA_TRNA_LIGASE_II"/>
    <property type="match status" value="1"/>
</dbReference>